<reference key="1">
    <citation type="journal article" date="1995" name="FEMS Microbiol. Lett.">
        <title>Cloning, nucleotide sequence determination and expression of the Staphylococcus aureus hyaluronate lyase gene.</title>
        <authorList>
            <person name="Farrell A.M."/>
            <person name="Taylor D."/>
            <person name="Holland K.T."/>
        </authorList>
    </citation>
    <scope>NUCLEOTIDE SEQUENCE [GENOMIC DNA]</scope>
</reference>
<reference key="2">
    <citation type="book" date="2006" name="Gram positive pathogens, 2nd edition">
        <title>The Staphylococcus aureus NCTC 8325 genome.</title>
        <editorList>
            <person name="Fischetti V."/>
            <person name="Novick R."/>
            <person name="Ferretti J."/>
            <person name="Portnoy D."/>
            <person name="Rood J."/>
        </editorList>
        <authorList>
            <person name="Gillaspy A.F."/>
            <person name="Worrell V."/>
            <person name="Orvis J."/>
            <person name="Roe B.A."/>
            <person name="Dyer D.W."/>
            <person name="Iandolo J.J."/>
        </authorList>
    </citation>
    <scope>NUCLEOTIDE SEQUENCE [LARGE SCALE GENOMIC DNA]</scope>
    <source>
        <strain>NCTC 8325 / PS 47</strain>
    </source>
</reference>
<keyword id="KW-0456">Lyase</keyword>
<keyword id="KW-1185">Reference proteome</keyword>
<keyword id="KW-0964">Secreted</keyword>
<keyword id="KW-0732">Signal</keyword>
<evidence type="ECO:0000250" key="1">
    <source>
        <dbReference type="UniProtKB" id="Q54873"/>
    </source>
</evidence>
<evidence type="ECO:0000255" key="2"/>
<evidence type="ECO:0000303" key="3">
    <source>
    </source>
</evidence>
<evidence type="ECO:0000305" key="4"/>
<organism>
    <name type="scientific">Staphylococcus aureus (strain NCTC 8325 / PS 47)</name>
    <dbReference type="NCBI Taxonomy" id="93061"/>
    <lineage>
        <taxon>Bacteria</taxon>
        <taxon>Bacillati</taxon>
        <taxon>Bacillota</taxon>
        <taxon>Bacilli</taxon>
        <taxon>Bacillales</taxon>
        <taxon>Staphylococcaceae</taxon>
        <taxon>Staphylococcus</taxon>
    </lineage>
</organism>
<feature type="signal peptide" evidence="2">
    <location>
        <begin position="1"/>
        <end position="40"/>
    </location>
</feature>
<feature type="chain" id="PRO_0000024931" description="Hyaluronate lyase">
    <location>
        <begin position="41"/>
        <end position="807"/>
    </location>
</feature>
<feature type="active site" evidence="1">
    <location>
        <position position="241"/>
    </location>
</feature>
<feature type="active site" evidence="1">
    <location>
        <position position="297"/>
    </location>
</feature>
<feature type="active site" evidence="1">
    <location>
        <position position="306"/>
    </location>
</feature>
<name>HYSA_STAA8</name>
<proteinExistence type="inferred from homology"/>
<accession>Q59801</accession>
<accession>Q2FW54</accession>
<comment type="catalytic activity">
    <reaction evidence="1">
        <text>[hyaluronan](n) = n 3-(4-deoxy-beta-D-gluc-4-enuronosyl)-N-acetyl-D-glucosamine + H2O</text>
        <dbReference type="Rhea" id="RHEA:50240"/>
        <dbReference type="Rhea" id="RHEA-COMP:12583"/>
        <dbReference type="ChEBI" id="CHEBI:15377"/>
        <dbReference type="ChEBI" id="CHEBI:132151"/>
        <dbReference type="ChEBI" id="CHEBI:132153"/>
        <dbReference type="EC" id="4.2.2.1"/>
    </reaction>
</comment>
<comment type="subcellular location">
    <subcellularLocation>
        <location evidence="4">Secreted</location>
    </subcellularLocation>
</comment>
<comment type="similarity">
    <text evidence="4">Belongs to the polysaccharide lyase 8 family.</text>
</comment>
<protein>
    <recommendedName>
        <fullName evidence="3">Hyaluronate lyase</fullName>
        <ecNumber evidence="1">4.2.2.1</ecNumber>
    </recommendedName>
    <alternativeName>
        <fullName>Hyaluronidase</fullName>
        <shortName>HYase</shortName>
    </alternativeName>
</protein>
<sequence>MTYRIKKWQKLSTITLLMAGVITLNGGEFRSVDKHQIAVADTNVQTPDYEKLRNTWLDVNYGYDKYDENNPDMKKKFDATEKEATNLLKEMKTESGRKYLWSGAETLETNSSHMTRTYRNIEKIAEAMRNPKTTLNTDENKKKVKDALEWLHKNAYGKEPDKKVKELSENFTKTTGKNTNLNWWDYEIGTPKSLTNTLILLNDQFSNEEKKKFTAPIKTFAPDSDKILSSVGKAELAKGGNLVDISKVKLLECIIEEDKDMMKKSIDSFNKVFTYVQDSATGKERNGFYKDGSYIDHQDVPYTGAYGVVLLEGISQMMPMIKETPFNDKTQNDTTLKSWIDDGFMPLIYKGEMMDLSRGRAISRENETSHSASATVMKSLLRLSDAMDDSTKAKYKKIVKSSVESDSSYKQNDYLNSYSDIDKMKSLMTDNSISKNGLTQQLKIYNDMDRVTYHNKDLDFAFGLSMTSKNVARYESINGENLKGWHTGAGMSYLYNSDVKHYHDNFWVTADMKRLSGTTTLDNEILKDTDDKKSSKTFVGGTKVDDQHASIGMDFENQDKTLTAKKSYFILNDKIVFLGTGIKSTDSSKNPVTTIENRKANGYTLYTDDKQTTNSDNQENNSVFLESTDTKKNIGYHFLNKPKITVKKESHTGKWKEINKSQKDTQKTDEYYEVTQKHSNSDNKYGYVLYPGLSKDVFKTKKDEVTVVKQEDDFHVVKDNESVWAGVNYSNSTQTFDINNTKVEVKAKGMFILKKKDDNTYECSFYNPESTNSASDIESKISMTGYSITNKNTSTSNESGVHFELTK</sequence>
<dbReference type="EC" id="4.2.2.1" evidence="1"/>
<dbReference type="EMBL" id="U21221">
    <property type="protein sequence ID" value="AAA82984.1"/>
    <property type="molecule type" value="Genomic_DNA"/>
</dbReference>
<dbReference type="EMBL" id="CP000253">
    <property type="protein sequence ID" value="ABD31483.1"/>
    <property type="molecule type" value="Genomic_DNA"/>
</dbReference>
<dbReference type="RefSeq" id="WP_000222239.1">
    <property type="nucleotide sequence ID" value="NZ_LS483365.1"/>
</dbReference>
<dbReference type="RefSeq" id="YP_500931.1">
    <property type="nucleotide sequence ID" value="NC_007795.1"/>
</dbReference>
<dbReference type="SMR" id="Q59801"/>
<dbReference type="STRING" id="93061.SAOUHSC_02463"/>
<dbReference type="CAZy" id="PL8">
    <property type="family name" value="Polysaccharide Lyase Family 8"/>
</dbReference>
<dbReference type="PaxDb" id="1280-SAXN108_2455"/>
<dbReference type="GeneID" id="3919026"/>
<dbReference type="KEGG" id="sao:SAOUHSC_02463"/>
<dbReference type="PATRIC" id="fig|93061.5.peg.2222"/>
<dbReference type="eggNOG" id="COG5492">
    <property type="taxonomic scope" value="Bacteria"/>
</dbReference>
<dbReference type="HOGENOM" id="CLU_004172_5_1_9"/>
<dbReference type="OrthoDB" id="6636047at2"/>
<dbReference type="BRENDA" id="4.2.2.1">
    <property type="organism ID" value="3352"/>
</dbReference>
<dbReference type="PRO" id="PR:Q59801"/>
<dbReference type="Proteomes" id="UP000008816">
    <property type="component" value="Chromosome"/>
</dbReference>
<dbReference type="GO" id="GO:0005576">
    <property type="term" value="C:extracellular region"/>
    <property type="evidence" value="ECO:0007669"/>
    <property type="project" value="UniProtKB-SubCell"/>
</dbReference>
<dbReference type="GO" id="GO:0030246">
    <property type="term" value="F:carbohydrate binding"/>
    <property type="evidence" value="ECO:0007669"/>
    <property type="project" value="InterPro"/>
</dbReference>
<dbReference type="GO" id="GO:0030340">
    <property type="term" value="F:hyaluronate lyase activity"/>
    <property type="evidence" value="ECO:0007669"/>
    <property type="project" value="UniProtKB-EC"/>
</dbReference>
<dbReference type="GO" id="GO:0005975">
    <property type="term" value="P:carbohydrate metabolic process"/>
    <property type="evidence" value="ECO:0007669"/>
    <property type="project" value="InterPro"/>
</dbReference>
<dbReference type="CDD" id="cd01083">
    <property type="entry name" value="GAG_Lyase"/>
    <property type="match status" value="1"/>
</dbReference>
<dbReference type="Gene3D" id="2.70.98.10">
    <property type="match status" value="1"/>
</dbReference>
<dbReference type="Gene3D" id="1.50.10.100">
    <property type="entry name" value="Chondroitin AC/alginate lyase"/>
    <property type="match status" value="1"/>
</dbReference>
<dbReference type="Gene3D" id="2.60.220.10">
    <property type="entry name" value="Polysaccharide lyase family 8-like, C-terminal"/>
    <property type="match status" value="1"/>
</dbReference>
<dbReference type="InterPro" id="IPR008929">
    <property type="entry name" value="Chondroitin_lyas"/>
</dbReference>
<dbReference type="InterPro" id="IPR011013">
    <property type="entry name" value="Gal_mutarotase_sf_dom"/>
</dbReference>
<dbReference type="InterPro" id="IPR014718">
    <property type="entry name" value="GH-type_carb-bd"/>
</dbReference>
<dbReference type="InterPro" id="IPR038970">
    <property type="entry name" value="Lyase_8"/>
</dbReference>
<dbReference type="InterPro" id="IPR011071">
    <property type="entry name" value="Lyase_8-like_C"/>
</dbReference>
<dbReference type="InterPro" id="IPR012970">
    <property type="entry name" value="Lyase_8_alpha_N"/>
</dbReference>
<dbReference type="InterPro" id="IPR004103">
    <property type="entry name" value="Lyase_8_C"/>
</dbReference>
<dbReference type="InterPro" id="IPR003159">
    <property type="entry name" value="Lyase_8_central_dom"/>
</dbReference>
<dbReference type="PANTHER" id="PTHR38481">
    <property type="entry name" value="HYALURONATE LYASE"/>
    <property type="match status" value="1"/>
</dbReference>
<dbReference type="PANTHER" id="PTHR38481:SF1">
    <property type="entry name" value="HYALURONATE LYASE"/>
    <property type="match status" value="1"/>
</dbReference>
<dbReference type="Pfam" id="PF02278">
    <property type="entry name" value="Lyase_8"/>
    <property type="match status" value="1"/>
</dbReference>
<dbReference type="Pfam" id="PF02884">
    <property type="entry name" value="Lyase_8_C"/>
    <property type="match status" value="1"/>
</dbReference>
<dbReference type="Pfam" id="PF08124">
    <property type="entry name" value="Lyase_8_N"/>
    <property type="match status" value="1"/>
</dbReference>
<dbReference type="SUPFAM" id="SSF48230">
    <property type="entry name" value="Chondroitin AC/alginate lyase"/>
    <property type="match status" value="1"/>
</dbReference>
<dbReference type="SUPFAM" id="SSF74650">
    <property type="entry name" value="Galactose mutarotase-like"/>
    <property type="match status" value="1"/>
</dbReference>
<dbReference type="SUPFAM" id="SSF49863">
    <property type="entry name" value="Hyaluronate lyase-like, C-terminal domain"/>
    <property type="match status" value="1"/>
</dbReference>
<gene>
    <name evidence="3" type="primary">hysA</name>
    <name type="ordered locus">SAOUHSC_02463</name>
</gene>